<name>RL18_ACTP7</name>
<gene>
    <name evidence="1" type="primary">rplR</name>
    <name type="ordered locus">APP7_1861</name>
</gene>
<feature type="chain" id="PRO_1000142611" description="Large ribosomal subunit protein uL18">
    <location>
        <begin position="1"/>
        <end position="117"/>
    </location>
</feature>
<proteinExistence type="inferred from homology"/>
<dbReference type="EMBL" id="CP001091">
    <property type="protein sequence ID" value="ACE62513.1"/>
    <property type="molecule type" value="Genomic_DNA"/>
</dbReference>
<dbReference type="RefSeq" id="WP_005599310.1">
    <property type="nucleotide sequence ID" value="NC_010939.1"/>
</dbReference>
<dbReference type="SMR" id="B3GZ27"/>
<dbReference type="GeneID" id="48600068"/>
<dbReference type="KEGG" id="apa:APP7_1861"/>
<dbReference type="HOGENOM" id="CLU_098841_0_1_6"/>
<dbReference type="Proteomes" id="UP000001226">
    <property type="component" value="Chromosome"/>
</dbReference>
<dbReference type="GO" id="GO:0022625">
    <property type="term" value="C:cytosolic large ribosomal subunit"/>
    <property type="evidence" value="ECO:0007669"/>
    <property type="project" value="TreeGrafter"/>
</dbReference>
<dbReference type="GO" id="GO:0008097">
    <property type="term" value="F:5S rRNA binding"/>
    <property type="evidence" value="ECO:0007669"/>
    <property type="project" value="TreeGrafter"/>
</dbReference>
<dbReference type="GO" id="GO:0003735">
    <property type="term" value="F:structural constituent of ribosome"/>
    <property type="evidence" value="ECO:0007669"/>
    <property type="project" value="InterPro"/>
</dbReference>
<dbReference type="GO" id="GO:0006412">
    <property type="term" value="P:translation"/>
    <property type="evidence" value="ECO:0007669"/>
    <property type="project" value="UniProtKB-UniRule"/>
</dbReference>
<dbReference type="CDD" id="cd00432">
    <property type="entry name" value="Ribosomal_L18_L5e"/>
    <property type="match status" value="1"/>
</dbReference>
<dbReference type="FunFam" id="3.30.420.100:FF:000001">
    <property type="entry name" value="50S ribosomal protein L18"/>
    <property type="match status" value="1"/>
</dbReference>
<dbReference type="Gene3D" id="3.30.420.100">
    <property type="match status" value="1"/>
</dbReference>
<dbReference type="HAMAP" id="MF_01337_B">
    <property type="entry name" value="Ribosomal_uL18_B"/>
    <property type="match status" value="1"/>
</dbReference>
<dbReference type="InterPro" id="IPR004389">
    <property type="entry name" value="Ribosomal_uL18_bac-type"/>
</dbReference>
<dbReference type="InterPro" id="IPR005484">
    <property type="entry name" value="Ribosomal_uL18_bac/euk"/>
</dbReference>
<dbReference type="NCBIfam" id="TIGR00060">
    <property type="entry name" value="L18_bact"/>
    <property type="match status" value="1"/>
</dbReference>
<dbReference type="PANTHER" id="PTHR12899">
    <property type="entry name" value="39S RIBOSOMAL PROTEIN L18, MITOCHONDRIAL"/>
    <property type="match status" value="1"/>
</dbReference>
<dbReference type="PANTHER" id="PTHR12899:SF3">
    <property type="entry name" value="LARGE RIBOSOMAL SUBUNIT PROTEIN UL18M"/>
    <property type="match status" value="1"/>
</dbReference>
<dbReference type="Pfam" id="PF00861">
    <property type="entry name" value="Ribosomal_L18p"/>
    <property type="match status" value="1"/>
</dbReference>
<dbReference type="SUPFAM" id="SSF53137">
    <property type="entry name" value="Translational machinery components"/>
    <property type="match status" value="1"/>
</dbReference>
<accession>B3GZ27</accession>
<evidence type="ECO:0000255" key="1">
    <source>
        <dbReference type="HAMAP-Rule" id="MF_01337"/>
    </source>
</evidence>
<evidence type="ECO:0000305" key="2"/>
<organism>
    <name type="scientific">Actinobacillus pleuropneumoniae serotype 7 (strain AP76)</name>
    <dbReference type="NCBI Taxonomy" id="537457"/>
    <lineage>
        <taxon>Bacteria</taxon>
        <taxon>Pseudomonadati</taxon>
        <taxon>Pseudomonadota</taxon>
        <taxon>Gammaproteobacteria</taxon>
        <taxon>Pasteurellales</taxon>
        <taxon>Pasteurellaceae</taxon>
        <taxon>Actinobacillus</taxon>
    </lineage>
</organism>
<reference key="1">
    <citation type="submission" date="2008-06" db="EMBL/GenBank/DDBJ databases">
        <title>Genome and proteome analysis of A. pleuropneumoniae serotype 7.</title>
        <authorList>
            <person name="Linke B."/>
            <person name="Buettner F."/>
            <person name="Martinez-Arias R."/>
            <person name="Goesmann A."/>
            <person name="Baltes N."/>
            <person name="Tegetmeyer H."/>
            <person name="Singh M."/>
            <person name="Gerlach G.F."/>
        </authorList>
    </citation>
    <scope>NUCLEOTIDE SEQUENCE [LARGE SCALE GENOMIC DNA]</scope>
    <source>
        <strain>AP76</strain>
    </source>
</reference>
<sequence>MDKKVARIRRATRARHLMREQGATRLVVHRTPRHIYAQVIAPNGSEVLAAASTVEKVIKEQVKYTGNKDAAAVVGKLVAERALAKGIQAVAFDRSGFKYHGRVQVLADAAREAGLQF</sequence>
<comment type="function">
    <text evidence="1">This is one of the proteins that bind and probably mediate the attachment of the 5S RNA into the large ribosomal subunit, where it forms part of the central protuberance.</text>
</comment>
<comment type="subunit">
    <text evidence="1">Part of the 50S ribosomal subunit; part of the 5S rRNA/L5/L18/L25 subcomplex. Contacts the 5S and 23S rRNAs.</text>
</comment>
<comment type="similarity">
    <text evidence="1">Belongs to the universal ribosomal protein uL18 family.</text>
</comment>
<protein>
    <recommendedName>
        <fullName evidence="1">Large ribosomal subunit protein uL18</fullName>
    </recommendedName>
    <alternativeName>
        <fullName evidence="2">50S ribosomal protein L18</fullName>
    </alternativeName>
</protein>
<keyword id="KW-0687">Ribonucleoprotein</keyword>
<keyword id="KW-0689">Ribosomal protein</keyword>
<keyword id="KW-0694">RNA-binding</keyword>
<keyword id="KW-0699">rRNA-binding</keyword>